<proteinExistence type="evidence at protein level"/>
<dbReference type="EMBL" id="CP000077">
    <property type="protein sequence ID" value="AAY79985.1"/>
    <property type="molecule type" value="Genomic_DNA"/>
</dbReference>
<dbReference type="RefSeq" id="WP_011277487.1">
    <property type="nucleotide sequence ID" value="NC_007181.1"/>
</dbReference>
<dbReference type="PDB" id="8HKX">
    <property type="method" value="EM"/>
    <property type="resolution" value="3.14 A"/>
    <property type="chains" value="S19P=9-123"/>
</dbReference>
<dbReference type="PDB" id="8HKY">
    <property type="method" value="EM"/>
    <property type="resolution" value="4.45 A"/>
    <property type="chains" value="S19P=9-123"/>
</dbReference>
<dbReference type="PDB" id="8HKZ">
    <property type="method" value="EM"/>
    <property type="resolution" value="4.78 A"/>
    <property type="chains" value="S19P=9-123"/>
</dbReference>
<dbReference type="PDB" id="8HL1">
    <property type="method" value="EM"/>
    <property type="resolution" value="3.93 A"/>
    <property type="chains" value="S19P=9-123"/>
</dbReference>
<dbReference type="PDB" id="8HL2">
    <property type="method" value="EM"/>
    <property type="resolution" value="4.10 A"/>
    <property type="chains" value="S19P=9-123"/>
</dbReference>
<dbReference type="PDB" id="8HL3">
    <property type="method" value="EM"/>
    <property type="resolution" value="4.80 A"/>
    <property type="chains" value="S19P=9-123"/>
</dbReference>
<dbReference type="PDB" id="8HL4">
    <property type="method" value="EM"/>
    <property type="resolution" value="4.62 A"/>
    <property type="chains" value="S19P=9-123"/>
</dbReference>
<dbReference type="PDB" id="8HL5">
    <property type="method" value="EM"/>
    <property type="resolution" value="5.72 A"/>
    <property type="chains" value="S19P=9-123"/>
</dbReference>
<dbReference type="PDB" id="8WKP">
    <property type="method" value="EM"/>
    <property type="resolution" value="4.62 A"/>
    <property type="chains" value="S19P=9-123"/>
</dbReference>
<dbReference type="PDB" id="8WQ2">
    <property type="method" value="EM"/>
    <property type="resolution" value="4.10 A"/>
    <property type="chains" value="S19P=9-123"/>
</dbReference>
<dbReference type="PDB" id="8WQ4">
    <property type="method" value="EM"/>
    <property type="resolution" value="4.53 A"/>
    <property type="chains" value="S19P=9-123"/>
</dbReference>
<dbReference type="PDBsum" id="8HKX"/>
<dbReference type="PDBsum" id="8HKY"/>
<dbReference type="PDBsum" id="8HKZ"/>
<dbReference type="PDBsum" id="8HL1"/>
<dbReference type="PDBsum" id="8HL2"/>
<dbReference type="PDBsum" id="8HL3"/>
<dbReference type="PDBsum" id="8HL4"/>
<dbReference type="PDBsum" id="8HL5"/>
<dbReference type="PDBsum" id="8WKP"/>
<dbReference type="PDBsum" id="8WQ2"/>
<dbReference type="PDBsum" id="8WQ4"/>
<dbReference type="EMDB" id="EMD-34862"/>
<dbReference type="EMDB" id="EMD-34863"/>
<dbReference type="EMDB" id="EMD-34864"/>
<dbReference type="EMDB" id="EMD-34866"/>
<dbReference type="EMDB" id="EMD-34867"/>
<dbReference type="EMDB" id="EMD-34868"/>
<dbReference type="EMDB" id="EMD-34869"/>
<dbReference type="EMDB" id="EMD-34870"/>
<dbReference type="EMDB" id="EMD-37604"/>
<dbReference type="EMDB" id="EMD-37733"/>
<dbReference type="EMDB" id="EMD-37734"/>
<dbReference type="SMR" id="Q4JB44"/>
<dbReference type="STRING" id="330779.Saci_0593"/>
<dbReference type="GeneID" id="14551114"/>
<dbReference type="KEGG" id="sai:Saci_0593"/>
<dbReference type="PATRIC" id="fig|330779.12.peg.572"/>
<dbReference type="eggNOG" id="arCOG04099">
    <property type="taxonomic scope" value="Archaea"/>
</dbReference>
<dbReference type="HOGENOM" id="CLU_097347_1_1_2"/>
<dbReference type="Proteomes" id="UP000001018">
    <property type="component" value="Chromosome"/>
</dbReference>
<dbReference type="GO" id="GO:0022627">
    <property type="term" value="C:cytosolic small ribosomal subunit"/>
    <property type="evidence" value="ECO:0007669"/>
    <property type="project" value="TreeGrafter"/>
</dbReference>
<dbReference type="GO" id="GO:0019843">
    <property type="term" value="F:rRNA binding"/>
    <property type="evidence" value="ECO:0007669"/>
    <property type="project" value="UniProtKB-UniRule"/>
</dbReference>
<dbReference type="GO" id="GO:0003735">
    <property type="term" value="F:structural constituent of ribosome"/>
    <property type="evidence" value="ECO:0007669"/>
    <property type="project" value="InterPro"/>
</dbReference>
<dbReference type="GO" id="GO:0000028">
    <property type="term" value="P:ribosomal small subunit assembly"/>
    <property type="evidence" value="ECO:0007669"/>
    <property type="project" value="TreeGrafter"/>
</dbReference>
<dbReference type="GO" id="GO:0006412">
    <property type="term" value="P:translation"/>
    <property type="evidence" value="ECO:0007669"/>
    <property type="project" value="UniProtKB-UniRule"/>
</dbReference>
<dbReference type="FunFam" id="3.30.860.10:FF:000002">
    <property type="entry name" value="40S ribosomal protein S15"/>
    <property type="match status" value="1"/>
</dbReference>
<dbReference type="Gene3D" id="3.30.860.10">
    <property type="entry name" value="30s Ribosomal Protein S19, Chain A"/>
    <property type="match status" value="1"/>
</dbReference>
<dbReference type="HAMAP" id="MF_00531">
    <property type="entry name" value="Ribosomal_uS19"/>
    <property type="match status" value="1"/>
</dbReference>
<dbReference type="InterPro" id="IPR002222">
    <property type="entry name" value="Ribosomal_uS19"/>
</dbReference>
<dbReference type="InterPro" id="IPR020934">
    <property type="entry name" value="Ribosomal_uS19_CS"/>
</dbReference>
<dbReference type="InterPro" id="IPR005713">
    <property type="entry name" value="Ribosomal_uS19_euk/arc"/>
</dbReference>
<dbReference type="InterPro" id="IPR023575">
    <property type="entry name" value="Ribosomal_uS19_SF"/>
</dbReference>
<dbReference type="NCBIfam" id="NF003121">
    <property type="entry name" value="PRK04038.1"/>
    <property type="match status" value="1"/>
</dbReference>
<dbReference type="NCBIfam" id="TIGR01025">
    <property type="entry name" value="uS19_arch"/>
    <property type="match status" value="1"/>
</dbReference>
<dbReference type="PANTHER" id="PTHR11880">
    <property type="entry name" value="RIBOSOMAL PROTEIN S19P FAMILY MEMBER"/>
    <property type="match status" value="1"/>
</dbReference>
<dbReference type="PANTHER" id="PTHR11880:SF2">
    <property type="entry name" value="SMALL RIBOSOMAL SUBUNIT PROTEIN US19"/>
    <property type="match status" value="1"/>
</dbReference>
<dbReference type="Pfam" id="PF00203">
    <property type="entry name" value="Ribosomal_S19"/>
    <property type="match status" value="1"/>
</dbReference>
<dbReference type="PIRSF" id="PIRSF002144">
    <property type="entry name" value="Ribosomal_S19"/>
    <property type="match status" value="1"/>
</dbReference>
<dbReference type="PRINTS" id="PR00975">
    <property type="entry name" value="RIBOSOMALS19"/>
</dbReference>
<dbReference type="SUPFAM" id="SSF54570">
    <property type="entry name" value="Ribosomal protein S19"/>
    <property type="match status" value="1"/>
</dbReference>
<dbReference type="PROSITE" id="PS00323">
    <property type="entry name" value="RIBOSOMAL_S19"/>
    <property type="match status" value="1"/>
</dbReference>
<feature type="chain" id="PRO_0000130014" description="Small ribosomal subunit protein uS19">
    <location>
        <begin position="1"/>
        <end position="140"/>
    </location>
</feature>
<accession>Q4JB44</accession>
<name>RS19_SULAC</name>
<protein>
    <recommendedName>
        <fullName evidence="1">Small ribosomal subunit protein uS19</fullName>
    </recommendedName>
    <alternativeName>
        <fullName evidence="2">30S ribosomal protein S19</fullName>
    </alternativeName>
</protein>
<comment type="function">
    <text evidence="1">Protein S19 forms a complex with S13 that binds strongly to the 16S ribosomal RNA.</text>
</comment>
<comment type="similarity">
    <text evidence="1">Belongs to the universal ribosomal protein uS19 family.</text>
</comment>
<organism>
    <name type="scientific">Sulfolobus acidocaldarius (strain ATCC 33909 / DSM 639 / JCM 8929 / NBRC 15157 / NCIMB 11770)</name>
    <dbReference type="NCBI Taxonomy" id="330779"/>
    <lineage>
        <taxon>Archaea</taxon>
        <taxon>Thermoproteota</taxon>
        <taxon>Thermoprotei</taxon>
        <taxon>Sulfolobales</taxon>
        <taxon>Sulfolobaceae</taxon>
        <taxon>Sulfolobus</taxon>
    </lineage>
</organism>
<evidence type="ECO:0000255" key="1">
    <source>
        <dbReference type="HAMAP-Rule" id="MF_00531"/>
    </source>
</evidence>
<evidence type="ECO:0000305" key="2"/>
<reference key="1">
    <citation type="journal article" date="2005" name="J. Bacteriol.">
        <title>The genome of Sulfolobus acidocaldarius, a model organism of the Crenarchaeota.</title>
        <authorList>
            <person name="Chen L."/>
            <person name="Bruegger K."/>
            <person name="Skovgaard M."/>
            <person name="Redder P."/>
            <person name="She Q."/>
            <person name="Torarinsson E."/>
            <person name="Greve B."/>
            <person name="Awayez M."/>
            <person name="Zibat A."/>
            <person name="Klenk H.-P."/>
            <person name="Garrett R.A."/>
        </authorList>
    </citation>
    <scope>NUCLEOTIDE SEQUENCE [LARGE SCALE GENOMIC DNA]</scope>
    <source>
        <strain>ATCC 33909 / DSM 639 / JCM 8929 / NBRC 15157 / NCIMB 11770</strain>
    </source>
</reference>
<gene>
    <name evidence="1" type="primary">rps19</name>
    <name type="ordered locus">Saci_0593</name>
</gene>
<sequence>MSPEIPPEWKKFRYRGKSLEDLLNMPMDEFIKLLPSRQRRSLKRGFSDKQRRLLEKIRKISREGKQNKVIKTHVRNMVILPEMVGLRFAVYNGKEFVEFQVVPEMIGRYLGEYSITTKKVEHGEPGLKATKSSLFLAMKG</sequence>
<keyword id="KW-0002">3D-structure</keyword>
<keyword id="KW-1185">Reference proteome</keyword>
<keyword id="KW-0687">Ribonucleoprotein</keyword>
<keyword id="KW-0689">Ribosomal protein</keyword>
<keyword id="KW-0694">RNA-binding</keyword>
<keyword id="KW-0699">rRNA-binding</keyword>